<organism>
    <name type="scientific">Aliivibrio fischeri (strain MJ11)</name>
    <name type="common">Vibrio fischeri</name>
    <dbReference type="NCBI Taxonomy" id="388396"/>
    <lineage>
        <taxon>Bacteria</taxon>
        <taxon>Pseudomonadati</taxon>
        <taxon>Pseudomonadota</taxon>
        <taxon>Gammaproteobacteria</taxon>
        <taxon>Vibrionales</taxon>
        <taxon>Vibrionaceae</taxon>
        <taxon>Aliivibrio</taxon>
    </lineage>
</organism>
<accession>B5FG51</accession>
<comment type="catalytic activity">
    <reaction evidence="1">
        <text>uridine + ATP = UMP + ADP + H(+)</text>
        <dbReference type="Rhea" id="RHEA:16825"/>
        <dbReference type="ChEBI" id="CHEBI:15378"/>
        <dbReference type="ChEBI" id="CHEBI:16704"/>
        <dbReference type="ChEBI" id="CHEBI:30616"/>
        <dbReference type="ChEBI" id="CHEBI:57865"/>
        <dbReference type="ChEBI" id="CHEBI:456216"/>
        <dbReference type="EC" id="2.7.1.48"/>
    </reaction>
</comment>
<comment type="catalytic activity">
    <reaction evidence="1">
        <text>cytidine + ATP = CMP + ADP + H(+)</text>
        <dbReference type="Rhea" id="RHEA:24674"/>
        <dbReference type="ChEBI" id="CHEBI:15378"/>
        <dbReference type="ChEBI" id="CHEBI:17562"/>
        <dbReference type="ChEBI" id="CHEBI:30616"/>
        <dbReference type="ChEBI" id="CHEBI:60377"/>
        <dbReference type="ChEBI" id="CHEBI:456216"/>
        <dbReference type="EC" id="2.7.1.48"/>
    </reaction>
</comment>
<comment type="pathway">
    <text evidence="1">Pyrimidine metabolism; CTP biosynthesis via salvage pathway; CTP from cytidine: step 1/3.</text>
</comment>
<comment type="pathway">
    <text evidence="1">Pyrimidine metabolism; UMP biosynthesis via salvage pathway; UMP from uridine: step 1/1.</text>
</comment>
<comment type="subcellular location">
    <subcellularLocation>
        <location evidence="1">Cytoplasm</location>
    </subcellularLocation>
</comment>
<comment type="similarity">
    <text evidence="1">Belongs to the uridine kinase family.</text>
</comment>
<sequence length="215" mass="24521">MSENSNHHCIIVGIAGASASGKSLIASTIYNELRAKVGDHQIGVITEDSYYKDQSHLTMEERVKTNYDHPNALDHELLCEHLEQLMRGEAVNIPTYSYTEHTRTSEVDVMTPKKVIILEGILLLTDPRLRNLMHASVFMDTPLDICLLRRARRDVEERGRTMESVFEQYQKTVRPMFMQFIDPSKQHADIIVPRGGKNRIAIDVLKAHISRLLKA</sequence>
<protein>
    <recommendedName>
        <fullName evidence="1">Uridine kinase</fullName>
        <ecNumber evidence="1">2.7.1.48</ecNumber>
    </recommendedName>
    <alternativeName>
        <fullName evidence="1">Cytidine monophosphokinase</fullName>
    </alternativeName>
    <alternativeName>
        <fullName evidence="1">Uridine monophosphokinase</fullName>
    </alternativeName>
</protein>
<keyword id="KW-0067">ATP-binding</keyword>
<keyword id="KW-0963">Cytoplasm</keyword>
<keyword id="KW-0418">Kinase</keyword>
<keyword id="KW-0547">Nucleotide-binding</keyword>
<keyword id="KW-0808">Transferase</keyword>
<proteinExistence type="inferred from homology"/>
<evidence type="ECO:0000255" key="1">
    <source>
        <dbReference type="HAMAP-Rule" id="MF_00551"/>
    </source>
</evidence>
<name>URK_ALIFM</name>
<reference key="1">
    <citation type="submission" date="2008-08" db="EMBL/GenBank/DDBJ databases">
        <title>Complete sequence of Vibrio fischeri strain MJ11.</title>
        <authorList>
            <person name="Mandel M.J."/>
            <person name="Stabb E.V."/>
            <person name="Ruby E.G."/>
            <person name="Ferriera S."/>
            <person name="Johnson J."/>
            <person name="Kravitz S."/>
            <person name="Beeson K."/>
            <person name="Sutton G."/>
            <person name="Rogers Y.-H."/>
            <person name="Friedman R."/>
            <person name="Frazier M."/>
            <person name="Venter J.C."/>
        </authorList>
    </citation>
    <scope>NUCLEOTIDE SEQUENCE [LARGE SCALE GENOMIC DNA]</scope>
    <source>
        <strain>MJ11</strain>
    </source>
</reference>
<dbReference type="EC" id="2.7.1.48" evidence="1"/>
<dbReference type="EMBL" id="CP001139">
    <property type="protein sequence ID" value="ACH65913.1"/>
    <property type="molecule type" value="Genomic_DNA"/>
</dbReference>
<dbReference type="RefSeq" id="WP_005420153.1">
    <property type="nucleotide sequence ID" value="NC_011184.1"/>
</dbReference>
<dbReference type="SMR" id="B5FG51"/>
<dbReference type="GeneID" id="54164451"/>
<dbReference type="KEGG" id="vfm:VFMJ11_1879"/>
<dbReference type="HOGENOM" id="CLU_021278_1_2_6"/>
<dbReference type="UniPathway" id="UPA00574">
    <property type="reaction ID" value="UER00637"/>
</dbReference>
<dbReference type="UniPathway" id="UPA00579">
    <property type="reaction ID" value="UER00640"/>
</dbReference>
<dbReference type="Proteomes" id="UP000001857">
    <property type="component" value="Chromosome I"/>
</dbReference>
<dbReference type="GO" id="GO:0005737">
    <property type="term" value="C:cytoplasm"/>
    <property type="evidence" value="ECO:0007669"/>
    <property type="project" value="UniProtKB-SubCell"/>
</dbReference>
<dbReference type="GO" id="GO:0005524">
    <property type="term" value="F:ATP binding"/>
    <property type="evidence" value="ECO:0007669"/>
    <property type="project" value="UniProtKB-UniRule"/>
</dbReference>
<dbReference type="GO" id="GO:0043771">
    <property type="term" value="F:cytidine kinase activity"/>
    <property type="evidence" value="ECO:0007669"/>
    <property type="project" value="RHEA"/>
</dbReference>
<dbReference type="GO" id="GO:0004849">
    <property type="term" value="F:uridine kinase activity"/>
    <property type="evidence" value="ECO:0007669"/>
    <property type="project" value="UniProtKB-UniRule"/>
</dbReference>
<dbReference type="GO" id="GO:0044211">
    <property type="term" value="P:CTP salvage"/>
    <property type="evidence" value="ECO:0007669"/>
    <property type="project" value="UniProtKB-UniRule"/>
</dbReference>
<dbReference type="GO" id="GO:0044206">
    <property type="term" value="P:UMP salvage"/>
    <property type="evidence" value="ECO:0007669"/>
    <property type="project" value="UniProtKB-UniRule"/>
</dbReference>
<dbReference type="CDD" id="cd02023">
    <property type="entry name" value="UMPK"/>
    <property type="match status" value="1"/>
</dbReference>
<dbReference type="Gene3D" id="3.40.50.300">
    <property type="entry name" value="P-loop containing nucleotide triphosphate hydrolases"/>
    <property type="match status" value="1"/>
</dbReference>
<dbReference type="HAMAP" id="MF_00551">
    <property type="entry name" value="Uridine_kinase"/>
    <property type="match status" value="1"/>
</dbReference>
<dbReference type="InterPro" id="IPR027417">
    <property type="entry name" value="P-loop_NTPase"/>
</dbReference>
<dbReference type="InterPro" id="IPR006083">
    <property type="entry name" value="PRK/URK"/>
</dbReference>
<dbReference type="InterPro" id="IPR026008">
    <property type="entry name" value="Uridine_kinase"/>
</dbReference>
<dbReference type="InterPro" id="IPR000764">
    <property type="entry name" value="Uridine_kinase-like"/>
</dbReference>
<dbReference type="NCBIfam" id="NF004018">
    <property type="entry name" value="PRK05480.1"/>
    <property type="match status" value="1"/>
</dbReference>
<dbReference type="NCBIfam" id="TIGR00235">
    <property type="entry name" value="udk"/>
    <property type="match status" value="1"/>
</dbReference>
<dbReference type="PANTHER" id="PTHR10285">
    <property type="entry name" value="URIDINE KINASE"/>
    <property type="match status" value="1"/>
</dbReference>
<dbReference type="Pfam" id="PF00485">
    <property type="entry name" value="PRK"/>
    <property type="match status" value="1"/>
</dbReference>
<dbReference type="PRINTS" id="PR00988">
    <property type="entry name" value="URIDINKINASE"/>
</dbReference>
<dbReference type="SUPFAM" id="SSF52540">
    <property type="entry name" value="P-loop containing nucleoside triphosphate hydrolases"/>
    <property type="match status" value="1"/>
</dbReference>
<gene>
    <name evidence="1" type="primary">udk</name>
    <name type="ordered locus">VFMJ11_1879</name>
</gene>
<feature type="chain" id="PRO_1000129096" description="Uridine kinase">
    <location>
        <begin position="1"/>
        <end position="215"/>
    </location>
</feature>
<feature type="binding site" evidence="1">
    <location>
        <begin position="16"/>
        <end position="23"/>
    </location>
    <ligand>
        <name>ATP</name>
        <dbReference type="ChEBI" id="CHEBI:30616"/>
    </ligand>
</feature>